<name>RL34_HYPNA</name>
<gene>
    <name evidence="1" type="primary">rpmH</name>
    <name type="ordered locus">HNE_0412</name>
</gene>
<protein>
    <recommendedName>
        <fullName evidence="1">Large ribosomal subunit protein bL34</fullName>
    </recommendedName>
    <alternativeName>
        <fullName evidence="3">50S ribosomal protein L34</fullName>
    </alternativeName>
</protein>
<feature type="chain" id="PRO_1000013355" description="Large ribosomal subunit protein bL34">
    <location>
        <begin position="1"/>
        <end position="44"/>
    </location>
</feature>
<feature type="region of interest" description="Disordered" evidence="2">
    <location>
        <begin position="1"/>
        <end position="44"/>
    </location>
</feature>
<feature type="compositionally biased region" description="Basic residues" evidence="2">
    <location>
        <begin position="26"/>
        <end position="44"/>
    </location>
</feature>
<comment type="similarity">
    <text evidence="1">Belongs to the bacterial ribosomal protein bL34 family.</text>
</comment>
<dbReference type="EMBL" id="CP000158">
    <property type="protein sequence ID" value="ABI78338.1"/>
    <property type="molecule type" value="Genomic_DNA"/>
</dbReference>
<dbReference type="RefSeq" id="WP_011645442.1">
    <property type="nucleotide sequence ID" value="NC_008358.1"/>
</dbReference>
<dbReference type="SMR" id="Q0C551"/>
<dbReference type="STRING" id="228405.HNE_0412"/>
<dbReference type="KEGG" id="hne:HNE_0412"/>
<dbReference type="eggNOG" id="COG0230">
    <property type="taxonomic scope" value="Bacteria"/>
</dbReference>
<dbReference type="HOGENOM" id="CLU_129938_2_0_5"/>
<dbReference type="Proteomes" id="UP000001959">
    <property type="component" value="Chromosome"/>
</dbReference>
<dbReference type="GO" id="GO:1990904">
    <property type="term" value="C:ribonucleoprotein complex"/>
    <property type="evidence" value="ECO:0007669"/>
    <property type="project" value="UniProtKB-KW"/>
</dbReference>
<dbReference type="GO" id="GO:0005840">
    <property type="term" value="C:ribosome"/>
    <property type="evidence" value="ECO:0007669"/>
    <property type="project" value="UniProtKB-KW"/>
</dbReference>
<dbReference type="GO" id="GO:0003735">
    <property type="term" value="F:structural constituent of ribosome"/>
    <property type="evidence" value="ECO:0007669"/>
    <property type="project" value="InterPro"/>
</dbReference>
<dbReference type="GO" id="GO:0006412">
    <property type="term" value="P:translation"/>
    <property type="evidence" value="ECO:0007669"/>
    <property type="project" value="UniProtKB-UniRule"/>
</dbReference>
<dbReference type="FunFam" id="1.10.287.3980:FF:000001">
    <property type="entry name" value="Mitochondrial ribosomal protein L34"/>
    <property type="match status" value="1"/>
</dbReference>
<dbReference type="Gene3D" id="1.10.287.3980">
    <property type="match status" value="1"/>
</dbReference>
<dbReference type="HAMAP" id="MF_00391">
    <property type="entry name" value="Ribosomal_bL34"/>
    <property type="match status" value="1"/>
</dbReference>
<dbReference type="InterPro" id="IPR000271">
    <property type="entry name" value="Ribosomal_bL34"/>
</dbReference>
<dbReference type="InterPro" id="IPR020939">
    <property type="entry name" value="Ribosomal_bL34_CS"/>
</dbReference>
<dbReference type="NCBIfam" id="TIGR01030">
    <property type="entry name" value="rpmH_bact"/>
    <property type="match status" value="1"/>
</dbReference>
<dbReference type="PANTHER" id="PTHR14503:SF4">
    <property type="entry name" value="LARGE RIBOSOMAL SUBUNIT PROTEIN BL34M"/>
    <property type="match status" value="1"/>
</dbReference>
<dbReference type="PANTHER" id="PTHR14503">
    <property type="entry name" value="MITOCHONDRIAL RIBOSOMAL PROTEIN 34 FAMILY MEMBER"/>
    <property type="match status" value="1"/>
</dbReference>
<dbReference type="Pfam" id="PF00468">
    <property type="entry name" value="Ribosomal_L34"/>
    <property type="match status" value="1"/>
</dbReference>
<dbReference type="PROSITE" id="PS00784">
    <property type="entry name" value="RIBOSOMAL_L34"/>
    <property type="match status" value="1"/>
</dbReference>
<sequence>MKRTFQPSNLRRARTHGFRERMSTKNGRKVLARRRAKGRKTLTA</sequence>
<proteinExistence type="inferred from homology"/>
<organism>
    <name type="scientific">Hyphomonas neptunium (strain ATCC 15444)</name>
    <dbReference type="NCBI Taxonomy" id="228405"/>
    <lineage>
        <taxon>Bacteria</taxon>
        <taxon>Pseudomonadati</taxon>
        <taxon>Pseudomonadota</taxon>
        <taxon>Alphaproteobacteria</taxon>
        <taxon>Hyphomonadales</taxon>
        <taxon>Hyphomonadaceae</taxon>
        <taxon>Hyphomonas</taxon>
    </lineage>
</organism>
<evidence type="ECO:0000255" key="1">
    <source>
        <dbReference type="HAMAP-Rule" id="MF_00391"/>
    </source>
</evidence>
<evidence type="ECO:0000256" key="2">
    <source>
        <dbReference type="SAM" id="MobiDB-lite"/>
    </source>
</evidence>
<evidence type="ECO:0000305" key="3"/>
<reference key="1">
    <citation type="journal article" date="2006" name="J. Bacteriol.">
        <title>Comparative genomic evidence for a close relationship between the dimorphic prosthecate bacteria Hyphomonas neptunium and Caulobacter crescentus.</title>
        <authorList>
            <person name="Badger J.H."/>
            <person name="Hoover T.R."/>
            <person name="Brun Y.V."/>
            <person name="Weiner R.M."/>
            <person name="Laub M.T."/>
            <person name="Alexandre G."/>
            <person name="Mrazek J."/>
            <person name="Ren Q."/>
            <person name="Paulsen I.T."/>
            <person name="Nelson K.E."/>
            <person name="Khouri H.M."/>
            <person name="Radune D."/>
            <person name="Sosa J."/>
            <person name="Dodson R.J."/>
            <person name="Sullivan S.A."/>
            <person name="Rosovitz M.J."/>
            <person name="Madupu R."/>
            <person name="Brinkac L.M."/>
            <person name="Durkin A.S."/>
            <person name="Daugherty S.C."/>
            <person name="Kothari S.P."/>
            <person name="Giglio M.G."/>
            <person name="Zhou L."/>
            <person name="Haft D.H."/>
            <person name="Selengut J.D."/>
            <person name="Davidsen T.M."/>
            <person name="Yang Q."/>
            <person name="Zafar N."/>
            <person name="Ward N.L."/>
        </authorList>
    </citation>
    <scope>NUCLEOTIDE SEQUENCE [LARGE SCALE GENOMIC DNA]</scope>
    <source>
        <strain>ATCC 15444</strain>
    </source>
</reference>
<keyword id="KW-1185">Reference proteome</keyword>
<keyword id="KW-0687">Ribonucleoprotein</keyword>
<keyword id="KW-0689">Ribosomal protein</keyword>
<accession>Q0C551</accession>